<comment type="function">
    <text evidence="5">Catalyzes the formation of S-adenosylmethionine from methionine and ATP. The reaction comprises two steps that are both catalyzed by the same enzyme: formation of S-adenosylmethionine (AdoMet) and triphosphate, and subsequent hydrolysis of the triphosphate.</text>
</comment>
<comment type="catalytic activity">
    <reaction evidence="5">
        <text>L-methionine + ATP + H2O = S-adenosyl-L-methionine + phosphate + diphosphate</text>
        <dbReference type="Rhea" id="RHEA:21080"/>
        <dbReference type="ChEBI" id="CHEBI:15377"/>
        <dbReference type="ChEBI" id="CHEBI:30616"/>
        <dbReference type="ChEBI" id="CHEBI:33019"/>
        <dbReference type="ChEBI" id="CHEBI:43474"/>
        <dbReference type="ChEBI" id="CHEBI:57844"/>
        <dbReference type="ChEBI" id="CHEBI:59789"/>
        <dbReference type="EC" id="2.5.1.6"/>
    </reaction>
</comment>
<comment type="cofactor">
    <cofactor evidence="5">
        <name>Mn(2+)</name>
        <dbReference type="ChEBI" id="CHEBI:29035"/>
    </cofactor>
    <cofactor evidence="5">
        <name>Mg(2+)</name>
        <dbReference type="ChEBI" id="CHEBI:18420"/>
    </cofactor>
    <cofactor evidence="5">
        <name>Co(2+)</name>
        <dbReference type="ChEBI" id="CHEBI:48828"/>
    </cofactor>
    <text evidence="3 5">Binds 2 divalent ions per subunit. The metal ions interact primarily with the substrate (By similarity). Can utilize magnesium, manganese or cobalt (in vitro) (By similarity).</text>
</comment>
<comment type="cofactor">
    <cofactor evidence="5">
        <name>K(+)</name>
        <dbReference type="ChEBI" id="CHEBI:29103"/>
    </cofactor>
    <text evidence="3">Binds 1 potassium ion per subunit. The potassium ion interacts primarily with the substrate (By similarity).</text>
</comment>
<comment type="pathway">
    <text evidence="5">Amino-acid biosynthesis; S-adenosyl-L-methionine biosynthesis; S-adenosyl-L-methionine from L-methionine: step 1/1.</text>
</comment>
<comment type="subunit">
    <text evidence="1">Homotetramer.</text>
</comment>
<comment type="subcellular location">
    <subcellularLocation>
        <location evidence="1">Cytoplasm</location>
    </subcellularLocation>
</comment>
<comment type="similarity">
    <text evidence="6">Belongs to the AdoMet synthase family.</text>
</comment>
<feature type="chain" id="PRO_0000174478" description="S-adenosylmethionine synthase">
    <location>
        <begin position="1"/>
        <end position="395"/>
    </location>
</feature>
<feature type="binding site" evidence="3">
    <location>
        <position position="10"/>
    </location>
    <ligand>
        <name>Mg(2+)</name>
        <dbReference type="ChEBI" id="CHEBI:18420"/>
    </ligand>
</feature>
<feature type="binding site" description="in other chain" evidence="4">
    <location>
        <position position="16"/>
    </location>
    <ligand>
        <name>ATP</name>
        <dbReference type="ChEBI" id="CHEBI:30616"/>
        <note>ligand shared between two neighboring subunits</note>
    </ligand>
</feature>
<feature type="binding site" evidence="2">
    <location>
        <position position="44"/>
    </location>
    <ligand>
        <name>K(+)</name>
        <dbReference type="ChEBI" id="CHEBI:29103"/>
    </ligand>
</feature>
<feature type="binding site" evidence="2">
    <location>
        <position position="57"/>
    </location>
    <ligand>
        <name>L-methionine</name>
        <dbReference type="ChEBI" id="CHEBI:57844"/>
    </ligand>
</feature>
<feature type="binding site" evidence="2">
    <location>
        <position position="100"/>
    </location>
    <ligand>
        <name>L-methionine</name>
        <dbReference type="ChEBI" id="CHEBI:57844"/>
    </ligand>
</feature>
<feature type="binding site" description="in other chain" evidence="4">
    <location>
        <begin position="168"/>
        <end position="170"/>
    </location>
    <ligand>
        <name>ATP</name>
        <dbReference type="ChEBI" id="CHEBI:30616"/>
        <note>ligand shared between two neighboring subunits</note>
    </ligand>
</feature>
<feature type="binding site" description="in other chain" evidence="4">
    <location>
        <begin position="236"/>
        <end position="239"/>
    </location>
    <ligand>
        <name>ATP</name>
        <dbReference type="ChEBI" id="CHEBI:30616"/>
        <note>ligand shared between two neighboring subunits</note>
    </ligand>
</feature>
<feature type="binding site" description="in other chain" evidence="2">
    <location>
        <begin position="253"/>
        <end position="254"/>
    </location>
    <ligand>
        <name>ATP</name>
        <dbReference type="ChEBI" id="CHEBI:30616"/>
        <note>ligand shared between two neighboring subunits</note>
    </ligand>
</feature>
<feature type="binding site" evidence="2">
    <location>
        <position position="270"/>
    </location>
    <ligand>
        <name>ATP</name>
        <dbReference type="ChEBI" id="CHEBI:30616"/>
        <note>ligand shared between two neighboring subunits</note>
    </ligand>
</feature>
<feature type="binding site" evidence="2">
    <location>
        <position position="274"/>
    </location>
    <ligand>
        <name>ATP</name>
        <dbReference type="ChEBI" id="CHEBI:30616"/>
        <note>ligand shared between two neighboring subunits</note>
    </ligand>
</feature>
<feature type="binding site" evidence="3">
    <location>
        <position position="278"/>
    </location>
    <ligand>
        <name>ATP</name>
        <dbReference type="ChEBI" id="CHEBI:30616"/>
        <note>ligand shared between two neighboring subunits</note>
    </ligand>
</feature>
<feature type="binding site" evidence="2">
    <location>
        <position position="278"/>
    </location>
    <ligand>
        <name>L-methionine</name>
        <dbReference type="ChEBI" id="CHEBI:57844"/>
    </ligand>
</feature>
<reference key="1">
    <citation type="journal article" date="1993" name="Plant Physiol.">
        <title>A cDNA encoding S-adenosyl-L-methionine synthetase from poplar.</title>
        <authorList>
            <person name="van Doorsselaere J."/>
            <person name="Gielen J."/>
            <person name="van Montagu M."/>
            <person name="Inze D."/>
        </authorList>
    </citation>
    <scope>NUCLEOTIDE SEQUENCE [MRNA]</scope>
    <source>
        <tissue>Leaf</tissue>
    </source>
</reference>
<gene>
    <name type="primary">METK</name>
</gene>
<protein>
    <recommendedName>
        <fullName>S-adenosylmethionine synthase</fullName>
        <shortName>AdoMet synthase</shortName>
        <ecNumber evidence="5">2.5.1.6</ecNumber>
    </recommendedName>
    <alternativeName>
        <fullName>Methionine adenosyltransferase</fullName>
        <shortName>MAT</shortName>
    </alternativeName>
</protein>
<organism>
    <name type="scientific">Populus deltoides</name>
    <name type="common">Eastern poplar</name>
    <name type="synonym">Eastern cottonwood</name>
    <dbReference type="NCBI Taxonomy" id="3696"/>
    <lineage>
        <taxon>Eukaryota</taxon>
        <taxon>Viridiplantae</taxon>
        <taxon>Streptophyta</taxon>
        <taxon>Embryophyta</taxon>
        <taxon>Tracheophyta</taxon>
        <taxon>Spermatophyta</taxon>
        <taxon>Magnoliopsida</taxon>
        <taxon>eudicotyledons</taxon>
        <taxon>Gunneridae</taxon>
        <taxon>Pentapetalae</taxon>
        <taxon>rosids</taxon>
        <taxon>fabids</taxon>
        <taxon>Malpighiales</taxon>
        <taxon>Salicaceae</taxon>
        <taxon>Saliceae</taxon>
        <taxon>Populus</taxon>
    </lineage>
</organism>
<name>METK_POPDE</name>
<evidence type="ECO:0000250" key="1"/>
<evidence type="ECO:0000250" key="2">
    <source>
        <dbReference type="UniProtKB" id="P0A817"/>
    </source>
</evidence>
<evidence type="ECO:0000250" key="3">
    <source>
        <dbReference type="UniProtKB" id="P13444"/>
    </source>
</evidence>
<evidence type="ECO:0000250" key="4">
    <source>
        <dbReference type="UniProtKB" id="Q00266"/>
    </source>
</evidence>
<evidence type="ECO:0000250" key="5">
    <source>
        <dbReference type="UniProtKB" id="Q96551"/>
    </source>
</evidence>
<evidence type="ECO:0000305" key="6"/>
<proteinExistence type="evidence at transcript level"/>
<accession>P47916</accession>
<keyword id="KW-0067">ATP-binding</keyword>
<keyword id="KW-0170">Cobalt</keyword>
<keyword id="KW-0963">Cytoplasm</keyword>
<keyword id="KW-0460">Magnesium</keyword>
<keyword id="KW-0479">Metal-binding</keyword>
<keyword id="KW-0547">Nucleotide-binding</keyword>
<keyword id="KW-0554">One-carbon metabolism</keyword>
<keyword id="KW-0630">Potassium</keyword>
<keyword id="KW-0808">Transferase</keyword>
<sequence>MAETFLFTSESVNEGHPDKLCDQISDAVLDACLAQDPDSKVACETCTKTNMVMVFGEITTKADVDYEKIVRDTCRNIGFTSADVGLDADNCKVLVNIEQQSPDIAQGVHGHFSKRPEEIGAGDQGHMFGYATDETPELMPLSHVLATKLGARLTEVRKNGTCAWLRPDGKTQVTVEYYNENGAMVPVRVHTVLISTQHDETVTNDEIAADLKEHVIKPVIPEKYLDEKTIFHLNPSGRFVIGGPHGESGLTGRKIIIDTYGGWGAHGGGAFSGKDPTKVDRSGAYIVRQAAKSIVASGLARRCIVQVSYAIGVPEPLSVFVDTYGTGKIPDKEILQIVKERFDFRPGMISINLDLKRGGNSRFLKTAAYGHFGRDDPDFTWEVVKPLKWDNKVQA</sequence>
<dbReference type="EC" id="2.5.1.6" evidence="5"/>
<dbReference type="EMBL" id="M73430">
    <property type="protein sequence ID" value="AAA20112.1"/>
    <property type="molecule type" value="mRNA"/>
</dbReference>
<dbReference type="SMR" id="P47916"/>
<dbReference type="UniPathway" id="UPA00315">
    <property type="reaction ID" value="UER00080"/>
</dbReference>
<dbReference type="GO" id="GO:0005737">
    <property type="term" value="C:cytoplasm"/>
    <property type="evidence" value="ECO:0007669"/>
    <property type="project" value="UniProtKB-SubCell"/>
</dbReference>
<dbReference type="GO" id="GO:0005524">
    <property type="term" value="F:ATP binding"/>
    <property type="evidence" value="ECO:0007669"/>
    <property type="project" value="UniProtKB-KW"/>
</dbReference>
<dbReference type="GO" id="GO:0046872">
    <property type="term" value="F:metal ion binding"/>
    <property type="evidence" value="ECO:0007669"/>
    <property type="project" value="UniProtKB-KW"/>
</dbReference>
<dbReference type="GO" id="GO:0004478">
    <property type="term" value="F:methionine adenosyltransferase activity"/>
    <property type="evidence" value="ECO:0007669"/>
    <property type="project" value="UniProtKB-EC"/>
</dbReference>
<dbReference type="GO" id="GO:0006730">
    <property type="term" value="P:one-carbon metabolic process"/>
    <property type="evidence" value="ECO:0007669"/>
    <property type="project" value="UniProtKB-KW"/>
</dbReference>
<dbReference type="GO" id="GO:0006556">
    <property type="term" value="P:S-adenosylmethionine biosynthetic process"/>
    <property type="evidence" value="ECO:0007669"/>
    <property type="project" value="UniProtKB-UniPathway"/>
</dbReference>
<dbReference type="CDD" id="cd18079">
    <property type="entry name" value="S-AdoMet_synt"/>
    <property type="match status" value="1"/>
</dbReference>
<dbReference type="FunFam" id="3.30.300.10:FF:000001">
    <property type="entry name" value="S-adenosylmethionine synthase"/>
    <property type="match status" value="1"/>
</dbReference>
<dbReference type="FunFam" id="3.30.300.10:FF:000003">
    <property type="entry name" value="S-adenosylmethionine synthase"/>
    <property type="match status" value="1"/>
</dbReference>
<dbReference type="FunFam" id="3.30.300.10:FF:000004">
    <property type="entry name" value="S-adenosylmethionine synthase"/>
    <property type="match status" value="1"/>
</dbReference>
<dbReference type="Gene3D" id="3.30.300.10">
    <property type="match status" value="3"/>
</dbReference>
<dbReference type="HAMAP" id="MF_00086">
    <property type="entry name" value="S_AdoMet_synth1"/>
    <property type="match status" value="1"/>
</dbReference>
<dbReference type="InterPro" id="IPR022631">
    <property type="entry name" value="ADOMET_SYNTHASE_CS"/>
</dbReference>
<dbReference type="InterPro" id="IPR022630">
    <property type="entry name" value="S-AdoMet_synt_C"/>
</dbReference>
<dbReference type="InterPro" id="IPR022629">
    <property type="entry name" value="S-AdoMet_synt_central"/>
</dbReference>
<dbReference type="InterPro" id="IPR022628">
    <property type="entry name" value="S-AdoMet_synt_N"/>
</dbReference>
<dbReference type="InterPro" id="IPR002133">
    <property type="entry name" value="S-AdoMet_synthetase"/>
</dbReference>
<dbReference type="InterPro" id="IPR022636">
    <property type="entry name" value="S-AdoMet_synthetase_sfam"/>
</dbReference>
<dbReference type="NCBIfam" id="TIGR01034">
    <property type="entry name" value="metK"/>
    <property type="match status" value="1"/>
</dbReference>
<dbReference type="PANTHER" id="PTHR11964">
    <property type="entry name" value="S-ADENOSYLMETHIONINE SYNTHETASE"/>
    <property type="match status" value="1"/>
</dbReference>
<dbReference type="Pfam" id="PF02773">
    <property type="entry name" value="S-AdoMet_synt_C"/>
    <property type="match status" value="1"/>
</dbReference>
<dbReference type="Pfam" id="PF02772">
    <property type="entry name" value="S-AdoMet_synt_M"/>
    <property type="match status" value="1"/>
</dbReference>
<dbReference type="Pfam" id="PF00438">
    <property type="entry name" value="S-AdoMet_synt_N"/>
    <property type="match status" value="1"/>
</dbReference>
<dbReference type="PIRSF" id="PIRSF000497">
    <property type="entry name" value="MAT"/>
    <property type="match status" value="1"/>
</dbReference>
<dbReference type="SUPFAM" id="SSF55973">
    <property type="entry name" value="S-adenosylmethionine synthetase"/>
    <property type="match status" value="3"/>
</dbReference>
<dbReference type="PROSITE" id="PS00376">
    <property type="entry name" value="ADOMET_SYNTHASE_1"/>
    <property type="match status" value="1"/>
</dbReference>
<dbReference type="PROSITE" id="PS00377">
    <property type="entry name" value="ADOMET_SYNTHASE_2"/>
    <property type="match status" value="1"/>
</dbReference>